<evidence type="ECO:0000255" key="1">
    <source>
        <dbReference type="HAMAP-Rule" id="MF_00315"/>
    </source>
</evidence>
<feature type="chain" id="PRO_1000205069" description="1-deoxy-D-xylulose-5-phosphate synthase">
    <location>
        <begin position="1"/>
        <end position="630"/>
    </location>
</feature>
<feature type="binding site" evidence="1">
    <location>
        <position position="72"/>
    </location>
    <ligand>
        <name>thiamine diphosphate</name>
        <dbReference type="ChEBI" id="CHEBI:58937"/>
    </ligand>
</feature>
<feature type="binding site" evidence="1">
    <location>
        <begin position="113"/>
        <end position="115"/>
    </location>
    <ligand>
        <name>thiamine diphosphate</name>
        <dbReference type="ChEBI" id="CHEBI:58937"/>
    </ligand>
</feature>
<feature type="binding site" evidence="1">
    <location>
        <position position="144"/>
    </location>
    <ligand>
        <name>Mg(2+)</name>
        <dbReference type="ChEBI" id="CHEBI:18420"/>
    </ligand>
</feature>
<feature type="binding site" evidence="1">
    <location>
        <begin position="145"/>
        <end position="146"/>
    </location>
    <ligand>
        <name>thiamine diphosphate</name>
        <dbReference type="ChEBI" id="CHEBI:58937"/>
    </ligand>
</feature>
<feature type="binding site" evidence="1">
    <location>
        <position position="173"/>
    </location>
    <ligand>
        <name>Mg(2+)</name>
        <dbReference type="ChEBI" id="CHEBI:18420"/>
    </ligand>
</feature>
<feature type="binding site" evidence="1">
    <location>
        <position position="173"/>
    </location>
    <ligand>
        <name>thiamine diphosphate</name>
        <dbReference type="ChEBI" id="CHEBI:58937"/>
    </ligand>
</feature>
<feature type="binding site" evidence="1">
    <location>
        <position position="284"/>
    </location>
    <ligand>
        <name>thiamine diphosphate</name>
        <dbReference type="ChEBI" id="CHEBI:58937"/>
    </ligand>
</feature>
<feature type="binding site" evidence="1">
    <location>
        <position position="367"/>
    </location>
    <ligand>
        <name>thiamine diphosphate</name>
        <dbReference type="ChEBI" id="CHEBI:58937"/>
    </ligand>
</feature>
<organism>
    <name type="scientific">Geobacillus sp. (strain WCH70)</name>
    <dbReference type="NCBI Taxonomy" id="471223"/>
    <lineage>
        <taxon>Bacteria</taxon>
        <taxon>Bacillati</taxon>
        <taxon>Bacillota</taxon>
        <taxon>Bacilli</taxon>
        <taxon>Bacillales</taxon>
        <taxon>Anoxybacillaceae</taxon>
        <taxon>Geobacillus</taxon>
    </lineage>
</organism>
<comment type="function">
    <text evidence="1">Catalyzes the acyloin condensation reaction between C atoms 2 and 3 of pyruvate and glyceraldehyde 3-phosphate to yield 1-deoxy-D-xylulose-5-phosphate (DXP).</text>
</comment>
<comment type="catalytic activity">
    <reaction evidence="1">
        <text>D-glyceraldehyde 3-phosphate + pyruvate + H(+) = 1-deoxy-D-xylulose 5-phosphate + CO2</text>
        <dbReference type="Rhea" id="RHEA:12605"/>
        <dbReference type="ChEBI" id="CHEBI:15361"/>
        <dbReference type="ChEBI" id="CHEBI:15378"/>
        <dbReference type="ChEBI" id="CHEBI:16526"/>
        <dbReference type="ChEBI" id="CHEBI:57792"/>
        <dbReference type="ChEBI" id="CHEBI:59776"/>
        <dbReference type="EC" id="2.2.1.7"/>
    </reaction>
</comment>
<comment type="cofactor">
    <cofactor evidence="1">
        <name>Mg(2+)</name>
        <dbReference type="ChEBI" id="CHEBI:18420"/>
    </cofactor>
    <text evidence="1">Binds 1 Mg(2+) ion per subunit.</text>
</comment>
<comment type="cofactor">
    <cofactor evidence="1">
        <name>thiamine diphosphate</name>
        <dbReference type="ChEBI" id="CHEBI:58937"/>
    </cofactor>
    <text evidence="1">Binds 1 thiamine pyrophosphate per subunit.</text>
</comment>
<comment type="pathway">
    <text evidence="1">Metabolic intermediate biosynthesis; 1-deoxy-D-xylulose 5-phosphate biosynthesis; 1-deoxy-D-xylulose 5-phosphate from D-glyceraldehyde 3-phosphate and pyruvate: step 1/1.</text>
</comment>
<comment type="subunit">
    <text evidence="1">Homodimer.</text>
</comment>
<comment type="similarity">
    <text evidence="1">Belongs to the transketolase family. DXPS subfamily.</text>
</comment>
<name>DXS_GEOSW</name>
<proteinExistence type="inferred from homology"/>
<sequence length="630" mass="69696">MDVTKIKNPRFLKNMSTKQLIELSADIRKFLIEKLSKTGGHIGPNLGVVELTIALHKVFDSPKDKLIWDVGHQSYVHKILTGRASEFDTLRQYKGLSGFPKRSESEHDVWETGHSSTSLSAAMGMAIARDLKGTDEYIVPIIGDGALTGGMALEALNHIGHEKKDIIVVLNDNEMSIAPNVGALHNVLGRLRTAGKYQWVKDELEFLLKRIPAVGGKLAATAERIKDSLKYLLVSGVFFEELGFTYLGPVDGHNFDDLFENLHYAKKIKGPVLLHVITKKGKGYSPAENDKVGTWHGTGPYKIETGDFLKPVDTAPSWSELVSETVRKLARTDKRIVAITPAMPVGSKLEGFASEFPDRMFDVGIAEQHATTLAAGLATQGMKPFLAIYSTFLQRAYDQVVHDVCRQNLNVFFAIDRAGLVGADGETHQGVFDIAFLRHVPNLVIMMPKDENEGQHMVYTAIQYDDGPIALRFPRGNGLGVKLDEELKKIPIGTWEVLREGRDLAILTFGTTISMALEAAEKLAKDNISVKVVNARFIKPMDEKILHDLLESNIPILTIEEAVLQGGFGSAVLEFAHDHGYHQAVINRMGIPDRFIEHGSVKELLNEIGLTTAHIIDRVKTIIPRKQKRA</sequence>
<accession>C5D467</accession>
<dbReference type="EC" id="2.2.1.7" evidence="1"/>
<dbReference type="EMBL" id="CP001638">
    <property type="protein sequence ID" value="ACS25023.1"/>
    <property type="molecule type" value="Genomic_DNA"/>
</dbReference>
<dbReference type="SMR" id="C5D467"/>
<dbReference type="STRING" id="471223.GWCH70_2319"/>
<dbReference type="KEGG" id="gwc:GWCH70_2319"/>
<dbReference type="eggNOG" id="COG1154">
    <property type="taxonomic scope" value="Bacteria"/>
</dbReference>
<dbReference type="HOGENOM" id="CLU_009227_1_4_9"/>
<dbReference type="OrthoDB" id="9803371at2"/>
<dbReference type="UniPathway" id="UPA00064">
    <property type="reaction ID" value="UER00091"/>
</dbReference>
<dbReference type="GO" id="GO:0005829">
    <property type="term" value="C:cytosol"/>
    <property type="evidence" value="ECO:0007669"/>
    <property type="project" value="TreeGrafter"/>
</dbReference>
<dbReference type="GO" id="GO:0008661">
    <property type="term" value="F:1-deoxy-D-xylulose-5-phosphate synthase activity"/>
    <property type="evidence" value="ECO:0007669"/>
    <property type="project" value="UniProtKB-UniRule"/>
</dbReference>
<dbReference type="GO" id="GO:0000287">
    <property type="term" value="F:magnesium ion binding"/>
    <property type="evidence" value="ECO:0007669"/>
    <property type="project" value="UniProtKB-UniRule"/>
</dbReference>
<dbReference type="GO" id="GO:0030976">
    <property type="term" value="F:thiamine pyrophosphate binding"/>
    <property type="evidence" value="ECO:0007669"/>
    <property type="project" value="UniProtKB-UniRule"/>
</dbReference>
<dbReference type="GO" id="GO:0052865">
    <property type="term" value="P:1-deoxy-D-xylulose 5-phosphate biosynthetic process"/>
    <property type="evidence" value="ECO:0007669"/>
    <property type="project" value="UniProtKB-UniPathway"/>
</dbReference>
<dbReference type="GO" id="GO:0019288">
    <property type="term" value="P:isopentenyl diphosphate biosynthetic process, methylerythritol 4-phosphate pathway"/>
    <property type="evidence" value="ECO:0007669"/>
    <property type="project" value="TreeGrafter"/>
</dbReference>
<dbReference type="GO" id="GO:0016114">
    <property type="term" value="P:terpenoid biosynthetic process"/>
    <property type="evidence" value="ECO:0007669"/>
    <property type="project" value="UniProtKB-UniRule"/>
</dbReference>
<dbReference type="GO" id="GO:0009228">
    <property type="term" value="P:thiamine biosynthetic process"/>
    <property type="evidence" value="ECO:0007669"/>
    <property type="project" value="UniProtKB-UniRule"/>
</dbReference>
<dbReference type="CDD" id="cd02007">
    <property type="entry name" value="TPP_DXS"/>
    <property type="match status" value="1"/>
</dbReference>
<dbReference type="CDD" id="cd07033">
    <property type="entry name" value="TPP_PYR_DXS_TK_like"/>
    <property type="match status" value="1"/>
</dbReference>
<dbReference type="FunFam" id="3.40.50.920:FF:000002">
    <property type="entry name" value="1-deoxy-D-xylulose-5-phosphate synthase"/>
    <property type="match status" value="1"/>
</dbReference>
<dbReference type="FunFam" id="3.40.50.970:FF:000030">
    <property type="entry name" value="1-deoxy-D-xylulose-5-phosphate synthase"/>
    <property type="match status" value="1"/>
</dbReference>
<dbReference type="Gene3D" id="3.40.50.920">
    <property type="match status" value="1"/>
</dbReference>
<dbReference type="Gene3D" id="3.40.50.970">
    <property type="match status" value="2"/>
</dbReference>
<dbReference type="HAMAP" id="MF_00315">
    <property type="entry name" value="DXP_synth"/>
    <property type="match status" value="1"/>
</dbReference>
<dbReference type="InterPro" id="IPR005477">
    <property type="entry name" value="Dxylulose-5-P_synthase"/>
</dbReference>
<dbReference type="InterPro" id="IPR029061">
    <property type="entry name" value="THDP-binding"/>
</dbReference>
<dbReference type="InterPro" id="IPR009014">
    <property type="entry name" value="Transketo_C/PFOR_II"/>
</dbReference>
<dbReference type="InterPro" id="IPR005475">
    <property type="entry name" value="Transketolase-like_Pyr-bd"/>
</dbReference>
<dbReference type="InterPro" id="IPR020826">
    <property type="entry name" value="Transketolase_BS"/>
</dbReference>
<dbReference type="InterPro" id="IPR033248">
    <property type="entry name" value="Transketolase_C"/>
</dbReference>
<dbReference type="InterPro" id="IPR049557">
    <property type="entry name" value="Transketolase_CS"/>
</dbReference>
<dbReference type="NCBIfam" id="TIGR00204">
    <property type="entry name" value="dxs"/>
    <property type="match status" value="1"/>
</dbReference>
<dbReference type="NCBIfam" id="NF003933">
    <property type="entry name" value="PRK05444.2-2"/>
    <property type="match status" value="1"/>
</dbReference>
<dbReference type="PANTHER" id="PTHR43322">
    <property type="entry name" value="1-D-DEOXYXYLULOSE 5-PHOSPHATE SYNTHASE-RELATED"/>
    <property type="match status" value="1"/>
</dbReference>
<dbReference type="PANTHER" id="PTHR43322:SF5">
    <property type="entry name" value="1-DEOXY-D-XYLULOSE-5-PHOSPHATE SYNTHASE, CHLOROPLASTIC"/>
    <property type="match status" value="1"/>
</dbReference>
<dbReference type="Pfam" id="PF13292">
    <property type="entry name" value="DXP_synthase_N"/>
    <property type="match status" value="1"/>
</dbReference>
<dbReference type="Pfam" id="PF02779">
    <property type="entry name" value="Transket_pyr"/>
    <property type="match status" value="1"/>
</dbReference>
<dbReference type="Pfam" id="PF02780">
    <property type="entry name" value="Transketolase_C"/>
    <property type="match status" value="1"/>
</dbReference>
<dbReference type="SMART" id="SM00861">
    <property type="entry name" value="Transket_pyr"/>
    <property type="match status" value="1"/>
</dbReference>
<dbReference type="SUPFAM" id="SSF52518">
    <property type="entry name" value="Thiamin diphosphate-binding fold (THDP-binding)"/>
    <property type="match status" value="2"/>
</dbReference>
<dbReference type="SUPFAM" id="SSF52922">
    <property type="entry name" value="TK C-terminal domain-like"/>
    <property type="match status" value="1"/>
</dbReference>
<dbReference type="PROSITE" id="PS00801">
    <property type="entry name" value="TRANSKETOLASE_1"/>
    <property type="match status" value="1"/>
</dbReference>
<dbReference type="PROSITE" id="PS00802">
    <property type="entry name" value="TRANSKETOLASE_2"/>
    <property type="match status" value="1"/>
</dbReference>
<keyword id="KW-0414">Isoprene biosynthesis</keyword>
<keyword id="KW-0460">Magnesium</keyword>
<keyword id="KW-0479">Metal-binding</keyword>
<keyword id="KW-0784">Thiamine biosynthesis</keyword>
<keyword id="KW-0786">Thiamine pyrophosphate</keyword>
<keyword id="KW-0808">Transferase</keyword>
<reference key="1">
    <citation type="submission" date="2009-06" db="EMBL/GenBank/DDBJ databases">
        <title>Complete sequence of chromosome of Geopacillus sp. WCH70.</title>
        <authorList>
            <consortium name="US DOE Joint Genome Institute"/>
            <person name="Lucas S."/>
            <person name="Copeland A."/>
            <person name="Lapidus A."/>
            <person name="Glavina del Rio T."/>
            <person name="Dalin E."/>
            <person name="Tice H."/>
            <person name="Bruce D."/>
            <person name="Goodwin L."/>
            <person name="Pitluck S."/>
            <person name="Chertkov O."/>
            <person name="Brettin T."/>
            <person name="Detter J.C."/>
            <person name="Han C."/>
            <person name="Larimer F."/>
            <person name="Land M."/>
            <person name="Hauser L."/>
            <person name="Kyrpides N."/>
            <person name="Mikhailova N."/>
            <person name="Brumm P."/>
            <person name="Mead D.A."/>
            <person name="Richardson P."/>
        </authorList>
    </citation>
    <scope>NUCLEOTIDE SEQUENCE [LARGE SCALE GENOMIC DNA]</scope>
    <source>
        <strain>WCH70</strain>
    </source>
</reference>
<gene>
    <name evidence="1" type="primary">dxs</name>
    <name type="ordered locus">GWCH70_2319</name>
</gene>
<protein>
    <recommendedName>
        <fullName evidence="1">1-deoxy-D-xylulose-5-phosphate synthase</fullName>
        <ecNumber evidence="1">2.2.1.7</ecNumber>
    </recommendedName>
    <alternativeName>
        <fullName evidence="1">1-deoxyxylulose-5-phosphate synthase</fullName>
        <shortName evidence="1">DXP synthase</shortName>
        <shortName evidence="1">DXPS</shortName>
    </alternativeName>
</protein>